<gene>
    <name evidence="8" type="primary">Parp12</name>
    <name type="synonym">Zc3hdc1</name>
</gene>
<proteinExistence type="evidence at protein level"/>
<protein>
    <recommendedName>
        <fullName evidence="7">Protein mono-ADP-ribosyltransferase PARP12</fullName>
        <ecNumber evidence="1">2.4.2.-</ecNumber>
    </recommendedName>
    <alternativeName>
        <fullName>ADP-ribosyltransferase diphtheria toxin-like 12</fullName>
        <shortName>ARTD12</shortName>
    </alternativeName>
    <alternativeName>
        <fullName>Poly [ADP-ribose] polymerase 12</fullName>
        <shortName>PARP-12</shortName>
    </alternativeName>
    <alternativeName>
        <fullName>Zinc finger CCCH domain-containing protein 1</fullName>
    </alternativeName>
</protein>
<dbReference type="EC" id="2.4.2.-" evidence="1"/>
<dbReference type="EMBL" id="AK036886">
    <property type="protein sequence ID" value="BAC29622.1"/>
    <property type="molecule type" value="mRNA"/>
</dbReference>
<dbReference type="EMBL" id="CH466533">
    <property type="protein sequence ID" value="EDL13617.1"/>
    <property type="molecule type" value="Genomic_DNA"/>
</dbReference>
<dbReference type="EMBL" id="BC120733">
    <property type="protein sequence ID" value="AAI20734.1"/>
    <property type="molecule type" value="mRNA"/>
</dbReference>
<dbReference type="EMBL" id="BC137645">
    <property type="protein sequence ID" value="AAI37646.1"/>
    <property type="molecule type" value="mRNA"/>
</dbReference>
<dbReference type="EMBL" id="BC024579">
    <property type="protein sequence ID" value="AAH24579.1"/>
    <property type="molecule type" value="mRNA"/>
</dbReference>
<dbReference type="EMBL" id="BC028906">
    <property type="protein sequence ID" value="AAH28906.1"/>
    <property type="molecule type" value="mRNA"/>
</dbReference>
<dbReference type="EMBL" id="BC048927">
    <property type="protein sequence ID" value="AAH48927.1"/>
    <property type="molecule type" value="mRNA"/>
</dbReference>
<dbReference type="CCDS" id="CCDS20019.1"/>
<dbReference type="RefSeq" id="NP_766481.2">
    <property type="nucleotide sequence ID" value="NM_172893.3"/>
</dbReference>
<dbReference type="SMR" id="Q8BZ20"/>
<dbReference type="BioGRID" id="232556">
    <property type="interactions" value="6"/>
</dbReference>
<dbReference type="FunCoup" id="Q8BZ20">
    <property type="interactions" value="268"/>
</dbReference>
<dbReference type="STRING" id="10090.ENSMUSP00000039704"/>
<dbReference type="GlyGen" id="Q8BZ20">
    <property type="glycosylation" value="1 site"/>
</dbReference>
<dbReference type="iPTMnet" id="Q8BZ20"/>
<dbReference type="PhosphoSitePlus" id="Q8BZ20"/>
<dbReference type="SwissPalm" id="Q8BZ20"/>
<dbReference type="jPOST" id="Q8BZ20"/>
<dbReference type="PaxDb" id="10090-ENSMUSP00000039704"/>
<dbReference type="ProteomicsDB" id="287885"/>
<dbReference type="Pumba" id="Q8BZ20"/>
<dbReference type="Antibodypedia" id="1226">
    <property type="antibodies" value="96 antibodies from 24 providers"/>
</dbReference>
<dbReference type="DNASU" id="243771"/>
<dbReference type="Ensembl" id="ENSMUST00000038398.7">
    <property type="protein sequence ID" value="ENSMUSP00000039704.7"/>
    <property type="gene ID" value="ENSMUSG00000038507.7"/>
</dbReference>
<dbReference type="GeneID" id="243771"/>
<dbReference type="KEGG" id="mmu:243771"/>
<dbReference type="UCSC" id="uc009blg.2">
    <property type="organism name" value="mouse"/>
</dbReference>
<dbReference type="AGR" id="MGI:2143990"/>
<dbReference type="CTD" id="64761"/>
<dbReference type="MGI" id="MGI:2143990">
    <property type="gene designation" value="Parp12"/>
</dbReference>
<dbReference type="VEuPathDB" id="HostDB:ENSMUSG00000038507"/>
<dbReference type="eggNOG" id="ENOG502QSC4">
    <property type="taxonomic scope" value="Eukaryota"/>
</dbReference>
<dbReference type="GeneTree" id="ENSGT00940000154649"/>
<dbReference type="HOGENOM" id="CLU_014825_2_1_1"/>
<dbReference type="InParanoid" id="Q8BZ20"/>
<dbReference type="OMA" id="WKDLDNM"/>
<dbReference type="OrthoDB" id="6133115at2759"/>
<dbReference type="PhylomeDB" id="Q8BZ20"/>
<dbReference type="TreeFam" id="TF338389"/>
<dbReference type="BioGRID-ORCS" id="243771">
    <property type="hits" value="1 hit in 79 CRISPR screens"/>
</dbReference>
<dbReference type="ChiTaRS" id="Parp12">
    <property type="organism name" value="mouse"/>
</dbReference>
<dbReference type="PRO" id="PR:Q8BZ20"/>
<dbReference type="Proteomes" id="UP000000589">
    <property type="component" value="Chromosome 6"/>
</dbReference>
<dbReference type="RNAct" id="Q8BZ20">
    <property type="molecule type" value="protein"/>
</dbReference>
<dbReference type="Bgee" id="ENSMUSG00000038507">
    <property type="expression patterns" value="Expressed in animal zygote and 223 other cell types or tissues"/>
</dbReference>
<dbReference type="GO" id="GO:0005634">
    <property type="term" value="C:nucleus"/>
    <property type="evidence" value="ECO:0007669"/>
    <property type="project" value="UniProtKB-SubCell"/>
</dbReference>
<dbReference type="GO" id="GO:0003950">
    <property type="term" value="F:NAD+ poly-ADP-ribosyltransferase activity"/>
    <property type="evidence" value="ECO:0007669"/>
    <property type="project" value="InterPro"/>
</dbReference>
<dbReference type="GO" id="GO:1990404">
    <property type="term" value="F:NAD+-protein mono-ADP-ribosyltransferase activity"/>
    <property type="evidence" value="ECO:0000250"/>
    <property type="project" value="UniProtKB"/>
</dbReference>
<dbReference type="GO" id="GO:0140806">
    <property type="term" value="F:NAD+-protein-aspartate ADP-ribosyltransferase activity"/>
    <property type="evidence" value="ECO:0007669"/>
    <property type="project" value="RHEA"/>
</dbReference>
<dbReference type="GO" id="GO:0140803">
    <property type="term" value="F:NAD+-protein-cysteine ADP-ribosyltransferase activity"/>
    <property type="evidence" value="ECO:0007669"/>
    <property type="project" value="RHEA"/>
</dbReference>
<dbReference type="GO" id="GO:0016779">
    <property type="term" value="F:nucleotidyltransferase activity"/>
    <property type="evidence" value="ECO:0007669"/>
    <property type="project" value="UniProtKB-KW"/>
</dbReference>
<dbReference type="GO" id="GO:0008270">
    <property type="term" value="F:zinc ion binding"/>
    <property type="evidence" value="ECO:0007669"/>
    <property type="project" value="UniProtKB-KW"/>
</dbReference>
<dbReference type="GO" id="GO:0070213">
    <property type="term" value="P:protein auto-ADP-ribosylation"/>
    <property type="evidence" value="ECO:0000250"/>
    <property type="project" value="UniProtKB"/>
</dbReference>
<dbReference type="CDD" id="cd01439">
    <property type="entry name" value="TCCD_inducible_PARP_like"/>
    <property type="match status" value="1"/>
</dbReference>
<dbReference type="FunFam" id="3.30.720.50:FF:000007">
    <property type="entry name" value="CCCH-type zinc finger antiviral protein"/>
    <property type="match status" value="1"/>
</dbReference>
<dbReference type="FunFam" id="3.90.228.10:FF:000003">
    <property type="entry name" value="TCDD-inducible poly [ADP-ribose] polymerase"/>
    <property type="match status" value="1"/>
</dbReference>
<dbReference type="Gene3D" id="3.30.1370.210">
    <property type="match status" value="1"/>
</dbReference>
<dbReference type="Gene3D" id="3.30.720.50">
    <property type="match status" value="1"/>
</dbReference>
<dbReference type="Gene3D" id="3.90.228.10">
    <property type="match status" value="1"/>
</dbReference>
<dbReference type="InterPro" id="IPR051712">
    <property type="entry name" value="ARTD-AVP"/>
</dbReference>
<dbReference type="InterPro" id="IPR012317">
    <property type="entry name" value="Poly(ADP-ribose)pol_cat_dom"/>
</dbReference>
<dbReference type="InterPro" id="IPR056226">
    <property type="entry name" value="WH_PARP12"/>
</dbReference>
<dbReference type="InterPro" id="IPR004170">
    <property type="entry name" value="WWE_dom"/>
</dbReference>
<dbReference type="InterPro" id="IPR037197">
    <property type="entry name" value="WWE_dom_sf"/>
</dbReference>
<dbReference type="InterPro" id="IPR000571">
    <property type="entry name" value="Znf_CCCH"/>
</dbReference>
<dbReference type="PANTHER" id="PTHR45740">
    <property type="entry name" value="POLY [ADP-RIBOSE] POLYMERASE"/>
    <property type="match status" value="1"/>
</dbReference>
<dbReference type="PANTHER" id="PTHR45740:SF6">
    <property type="entry name" value="PROTEIN MONO-ADP-RIBOSYLTRANSFERASE PARP12"/>
    <property type="match status" value="1"/>
</dbReference>
<dbReference type="Pfam" id="PF00644">
    <property type="entry name" value="PARP"/>
    <property type="match status" value="1"/>
</dbReference>
<dbReference type="Pfam" id="PF24356">
    <property type="entry name" value="WH_PARP12"/>
    <property type="match status" value="1"/>
</dbReference>
<dbReference type="Pfam" id="PF02825">
    <property type="entry name" value="WWE"/>
    <property type="match status" value="1"/>
</dbReference>
<dbReference type="Pfam" id="PF23466">
    <property type="entry name" value="WWE_4"/>
    <property type="match status" value="1"/>
</dbReference>
<dbReference type="Pfam" id="PF25261">
    <property type="entry name" value="zf-CCCH_PARP12"/>
    <property type="match status" value="2"/>
</dbReference>
<dbReference type="SMART" id="SM00356">
    <property type="entry name" value="ZnF_C3H1"/>
    <property type="match status" value="3"/>
</dbReference>
<dbReference type="SUPFAM" id="SSF56399">
    <property type="entry name" value="ADP-ribosylation"/>
    <property type="match status" value="1"/>
</dbReference>
<dbReference type="SUPFAM" id="SSF117839">
    <property type="entry name" value="WWE domain"/>
    <property type="match status" value="1"/>
</dbReference>
<dbReference type="PROSITE" id="PS51059">
    <property type="entry name" value="PARP_CATALYTIC"/>
    <property type="match status" value="1"/>
</dbReference>
<dbReference type="PROSITE" id="PS50918">
    <property type="entry name" value="WWE"/>
    <property type="match status" value="2"/>
</dbReference>
<dbReference type="PROSITE" id="PS50103">
    <property type="entry name" value="ZF_C3H1"/>
    <property type="match status" value="4"/>
</dbReference>
<reference key="1">
    <citation type="journal article" date="2005" name="Science">
        <title>The transcriptional landscape of the mammalian genome.</title>
        <authorList>
            <person name="Carninci P."/>
            <person name="Kasukawa T."/>
            <person name="Katayama S."/>
            <person name="Gough J."/>
            <person name="Frith M.C."/>
            <person name="Maeda N."/>
            <person name="Oyama R."/>
            <person name="Ravasi T."/>
            <person name="Lenhard B."/>
            <person name="Wells C."/>
            <person name="Kodzius R."/>
            <person name="Shimokawa K."/>
            <person name="Bajic V.B."/>
            <person name="Brenner S.E."/>
            <person name="Batalov S."/>
            <person name="Forrest A.R."/>
            <person name="Zavolan M."/>
            <person name="Davis M.J."/>
            <person name="Wilming L.G."/>
            <person name="Aidinis V."/>
            <person name="Allen J.E."/>
            <person name="Ambesi-Impiombato A."/>
            <person name="Apweiler R."/>
            <person name="Aturaliya R.N."/>
            <person name="Bailey T.L."/>
            <person name="Bansal M."/>
            <person name="Baxter L."/>
            <person name="Beisel K.W."/>
            <person name="Bersano T."/>
            <person name="Bono H."/>
            <person name="Chalk A.M."/>
            <person name="Chiu K.P."/>
            <person name="Choudhary V."/>
            <person name="Christoffels A."/>
            <person name="Clutterbuck D.R."/>
            <person name="Crowe M.L."/>
            <person name="Dalla E."/>
            <person name="Dalrymple B.P."/>
            <person name="de Bono B."/>
            <person name="Della Gatta G."/>
            <person name="di Bernardo D."/>
            <person name="Down T."/>
            <person name="Engstrom P."/>
            <person name="Fagiolini M."/>
            <person name="Faulkner G."/>
            <person name="Fletcher C.F."/>
            <person name="Fukushima T."/>
            <person name="Furuno M."/>
            <person name="Futaki S."/>
            <person name="Gariboldi M."/>
            <person name="Georgii-Hemming P."/>
            <person name="Gingeras T.R."/>
            <person name="Gojobori T."/>
            <person name="Green R.E."/>
            <person name="Gustincich S."/>
            <person name="Harbers M."/>
            <person name="Hayashi Y."/>
            <person name="Hensch T.K."/>
            <person name="Hirokawa N."/>
            <person name="Hill D."/>
            <person name="Huminiecki L."/>
            <person name="Iacono M."/>
            <person name="Ikeo K."/>
            <person name="Iwama A."/>
            <person name="Ishikawa T."/>
            <person name="Jakt M."/>
            <person name="Kanapin A."/>
            <person name="Katoh M."/>
            <person name="Kawasawa Y."/>
            <person name="Kelso J."/>
            <person name="Kitamura H."/>
            <person name="Kitano H."/>
            <person name="Kollias G."/>
            <person name="Krishnan S.P."/>
            <person name="Kruger A."/>
            <person name="Kummerfeld S.K."/>
            <person name="Kurochkin I.V."/>
            <person name="Lareau L.F."/>
            <person name="Lazarevic D."/>
            <person name="Lipovich L."/>
            <person name="Liu J."/>
            <person name="Liuni S."/>
            <person name="McWilliam S."/>
            <person name="Madan Babu M."/>
            <person name="Madera M."/>
            <person name="Marchionni L."/>
            <person name="Matsuda H."/>
            <person name="Matsuzawa S."/>
            <person name="Miki H."/>
            <person name="Mignone F."/>
            <person name="Miyake S."/>
            <person name="Morris K."/>
            <person name="Mottagui-Tabar S."/>
            <person name="Mulder N."/>
            <person name="Nakano N."/>
            <person name="Nakauchi H."/>
            <person name="Ng P."/>
            <person name="Nilsson R."/>
            <person name="Nishiguchi S."/>
            <person name="Nishikawa S."/>
            <person name="Nori F."/>
            <person name="Ohara O."/>
            <person name="Okazaki Y."/>
            <person name="Orlando V."/>
            <person name="Pang K.C."/>
            <person name="Pavan W.J."/>
            <person name="Pavesi G."/>
            <person name="Pesole G."/>
            <person name="Petrovsky N."/>
            <person name="Piazza S."/>
            <person name="Reed J."/>
            <person name="Reid J.F."/>
            <person name="Ring B.Z."/>
            <person name="Ringwald M."/>
            <person name="Rost B."/>
            <person name="Ruan Y."/>
            <person name="Salzberg S.L."/>
            <person name="Sandelin A."/>
            <person name="Schneider C."/>
            <person name="Schoenbach C."/>
            <person name="Sekiguchi K."/>
            <person name="Semple C.A."/>
            <person name="Seno S."/>
            <person name="Sessa L."/>
            <person name="Sheng Y."/>
            <person name="Shibata Y."/>
            <person name="Shimada H."/>
            <person name="Shimada K."/>
            <person name="Silva D."/>
            <person name="Sinclair B."/>
            <person name="Sperling S."/>
            <person name="Stupka E."/>
            <person name="Sugiura K."/>
            <person name="Sultana R."/>
            <person name="Takenaka Y."/>
            <person name="Taki K."/>
            <person name="Tammoja K."/>
            <person name="Tan S.L."/>
            <person name="Tang S."/>
            <person name="Taylor M.S."/>
            <person name="Tegner J."/>
            <person name="Teichmann S.A."/>
            <person name="Ueda H.R."/>
            <person name="van Nimwegen E."/>
            <person name="Verardo R."/>
            <person name="Wei C.L."/>
            <person name="Yagi K."/>
            <person name="Yamanishi H."/>
            <person name="Zabarovsky E."/>
            <person name="Zhu S."/>
            <person name="Zimmer A."/>
            <person name="Hide W."/>
            <person name="Bult C."/>
            <person name="Grimmond S.M."/>
            <person name="Teasdale R.D."/>
            <person name="Liu E.T."/>
            <person name="Brusic V."/>
            <person name="Quackenbush J."/>
            <person name="Wahlestedt C."/>
            <person name="Mattick J.S."/>
            <person name="Hume D.A."/>
            <person name="Kai C."/>
            <person name="Sasaki D."/>
            <person name="Tomaru Y."/>
            <person name="Fukuda S."/>
            <person name="Kanamori-Katayama M."/>
            <person name="Suzuki M."/>
            <person name="Aoki J."/>
            <person name="Arakawa T."/>
            <person name="Iida J."/>
            <person name="Imamura K."/>
            <person name="Itoh M."/>
            <person name="Kato T."/>
            <person name="Kawaji H."/>
            <person name="Kawagashira N."/>
            <person name="Kawashima T."/>
            <person name="Kojima M."/>
            <person name="Kondo S."/>
            <person name="Konno H."/>
            <person name="Nakano K."/>
            <person name="Ninomiya N."/>
            <person name="Nishio T."/>
            <person name="Okada M."/>
            <person name="Plessy C."/>
            <person name="Shibata K."/>
            <person name="Shiraki T."/>
            <person name="Suzuki S."/>
            <person name="Tagami M."/>
            <person name="Waki K."/>
            <person name="Watahiki A."/>
            <person name="Okamura-Oho Y."/>
            <person name="Suzuki H."/>
            <person name="Kawai J."/>
            <person name="Hayashizaki Y."/>
        </authorList>
    </citation>
    <scope>NUCLEOTIDE SEQUENCE [LARGE SCALE MRNA]</scope>
    <source>
        <strain>C57BL/6J</strain>
        <tissue>Vagina</tissue>
    </source>
</reference>
<reference key="2">
    <citation type="submission" date="2005-09" db="EMBL/GenBank/DDBJ databases">
        <authorList>
            <person name="Mural R.J."/>
            <person name="Adams M.D."/>
            <person name="Myers E.W."/>
            <person name="Smith H.O."/>
            <person name="Venter J.C."/>
        </authorList>
    </citation>
    <scope>NUCLEOTIDE SEQUENCE [LARGE SCALE GENOMIC DNA]</scope>
</reference>
<reference key="3">
    <citation type="journal article" date="2004" name="Genome Res.">
        <title>The status, quality, and expansion of the NIH full-length cDNA project: the Mammalian Gene Collection (MGC).</title>
        <authorList>
            <consortium name="The MGC Project Team"/>
        </authorList>
    </citation>
    <scope>NUCLEOTIDE SEQUENCE [LARGE SCALE MRNA]</scope>
    <source>
        <tissue>Brain</tissue>
        <tissue>Mammary tumor</tissue>
        <tissue>Olfactory epithelium</tissue>
    </source>
</reference>
<reference key="4">
    <citation type="journal article" date="2010" name="Cell">
        <title>A tissue-specific atlas of mouse protein phosphorylation and expression.</title>
        <authorList>
            <person name="Huttlin E.L."/>
            <person name="Jedrychowski M.P."/>
            <person name="Elias J.E."/>
            <person name="Goswami T."/>
            <person name="Rad R."/>
            <person name="Beausoleil S.A."/>
            <person name="Villen J."/>
            <person name="Haas W."/>
            <person name="Sowa M.E."/>
            <person name="Gygi S.P."/>
        </authorList>
    </citation>
    <scope>PHOSPHORYLATION [LARGE SCALE ANALYSIS] AT SER-268</scope>
    <scope>IDENTIFICATION BY MASS SPECTROMETRY [LARGE SCALE ANALYSIS]</scope>
    <source>
        <tissue>Brown adipose tissue</tissue>
        <tissue>Kidney</tissue>
        <tissue>Liver</tissue>
        <tissue>Lung</tissue>
        <tissue>Pancreas</tissue>
    </source>
</reference>
<reference key="5">
    <citation type="journal article" date="2022" name="Adipocyte">
        <title>PARP12 is required for mitochondrial function maintenance in thermogenic adipocytes.</title>
        <authorList>
            <person name="Hu F."/>
            <person name="Li C."/>
            <person name="Ye Y."/>
            <person name="Lu X."/>
            <person name="Alimujiang M."/>
            <person name="Bai N."/>
            <person name="Sun J."/>
            <person name="Ma X."/>
            <person name="Li X."/>
            <person name="Yang Y."/>
        </authorList>
    </citation>
    <scope>FUNCTION</scope>
</reference>
<name>PAR12_MOUSE</name>
<sequence length="711" mass="79917">MAQAAVAVAEVTQLLCAAGGALELAELRRRLRTSLGTDALERLLRDCGRFVVASRAVVAVGAGREAAAAASERLVLAVSSLRLCRAHQGPKPGCTGLCAQLHLCKFLIYGNCKFLKTGKNCRNGHNLKTDHNLSVLRTHGVDHLTYTELCQLLLQNDPSLLPDICLHYNKGDGPFGSCSFQKQCIKLHICQYFLQGECKFGTSCKRSHEFTNSESLEQLERLGLSSDLVSRLLSTYRNAYDIKNKGSALSKVSPSPAGPQGSSERKDSSGPVSPGTPSQEESEQICLYHIRKSCSFQEKCHRVHFHLPYRWQFLDGGKWKDLDNMELIEEAYSNPSKDRIVYTESAAGFHFDNLDFNSMKFGNTLARRLSTASSVTKPPHFILTTDWIWYWMDEFGSWQEYGRQGSGHPVTTISSSDVERAYLAFCAPGADAQAATLKFQAGKHNYELHFKAFLQKNLVYGTIRKVCRRPKYVSPQDVQMKQSCNTKLHGPKSIPDYWDPAALPDLGFKKITLSSSSEEYQKVWNIFNRTLPFYFVQKIERIQNMGLWEVYQWQKCQMQKQNGGKEVDERQLFHGTSANFVDAICQQNFDWRVCGLHGTSYGKGSYFARDAAYSHHYSKSDTHSHMMFLARVLVGDFVRGSTSFVRPPAKEGQSNAFYDSCVNSMSDPTIFVVFEKHQVYPEYLIQYSTSSKPPASPSIFVALGNLFTSRQ</sequence>
<feature type="chain" id="PRO_0000211342" description="Protein mono-ADP-ribosyltransferase PARP12">
    <location>
        <begin position="1"/>
        <end position="711"/>
    </location>
</feature>
<feature type="domain" description="WWE 1" evidence="2">
    <location>
        <begin position="308"/>
        <end position="371"/>
    </location>
</feature>
<feature type="domain" description="WWE 2" evidence="2">
    <location>
        <begin position="374"/>
        <end position="468"/>
    </location>
</feature>
<feature type="domain" description="PARP catalytic" evidence="3">
    <location>
        <begin position="494"/>
        <end position="708"/>
    </location>
</feature>
<feature type="zinc finger region" description="C3H1-type 1" evidence="4">
    <location>
        <begin position="103"/>
        <end position="128"/>
    </location>
</feature>
<feature type="zinc finger region" description="C3H1-type 2" evidence="4">
    <location>
        <begin position="164"/>
        <end position="188"/>
    </location>
</feature>
<feature type="zinc finger region" description="C3H1-type 3" evidence="4">
    <location>
        <begin position="189"/>
        <end position="211"/>
    </location>
</feature>
<feature type="zinc finger region" description="C3H1-type 4" evidence="4">
    <location>
        <begin position="280"/>
        <end position="307"/>
    </location>
</feature>
<feature type="zinc finger region" description="C3H1-type 3" evidence="4">
    <location>
        <begin position="281"/>
        <end position="306"/>
    </location>
</feature>
<feature type="region of interest" description="Disordered" evidence="5">
    <location>
        <begin position="247"/>
        <end position="279"/>
    </location>
</feature>
<feature type="modified residue" description="Phosphoserine" evidence="9">
    <location>
        <position position="268"/>
    </location>
</feature>
<feature type="modified residue" description="ADP-ribosylcysteine" evidence="1">
    <location>
        <position position="484"/>
    </location>
</feature>
<feature type="modified residue" description="ADP-ribosyl aspartic acid" evidence="1">
    <location>
        <position position="610"/>
    </location>
</feature>
<feature type="modified residue" description="ADP-ribosyl aspartic acid" evidence="1">
    <location>
        <position position="621"/>
    </location>
</feature>
<feature type="sequence conflict" description="In Ref. 1; BAC29622." evidence="7" ref="1">
    <original>K</original>
    <variation>I</variation>
    <location>
        <position position="91"/>
    </location>
</feature>
<feature type="sequence conflict" description="In Ref. 1; BAC29622." evidence="7" ref="1">
    <original>E</original>
    <variation>K</variation>
    <location>
        <position position="400"/>
    </location>
</feature>
<keyword id="KW-0013">ADP-ribosylation</keyword>
<keyword id="KW-0963">Cytoplasm</keyword>
<keyword id="KW-0328">Glycosyltransferase</keyword>
<keyword id="KW-0333">Golgi apparatus</keyword>
<keyword id="KW-0479">Metal-binding</keyword>
<keyword id="KW-0520">NAD</keyword>
<keyword id="KW-0548">Nucleotidyltransferase</keyword>
<keyword id="KW-0539">Nucleus</keyword>
<keyword id="KW-0597">Phosphoprotein</keyword>
<keyword id="KW-1185">Reference proteome</keyword>
<keyword id="KW-0677">Repeat</keyword>
<keyword id="KW-0808">Transferase</keyword>
<keyword id="KW-0862">Zinc</keyword>
<keyword id="KW-0863">Zinc-finger</keyword>
<evidence type="ECO:0000250" key="1">
    <source>
        <dbReference type="UniProtKB" id="Q9H0J9"/>
    </source>
</evidence>
<evidence type="ECO:0000255" key="2">
    <source>
        <dbReference type="PROSITE-ProRule" id="PRU00248"/>
    </source>
</evidence>
<evidence type="ECO:0000255" key="3">
    <source>
        <dbReference type="PROSITE-ProRule" id="PRU00397"/>
    </source>
</evidence>
<evidence type="ECO:0000255" key="4">
    <source>
        <dbReference type="PROSITE-ProRule" id="PRU00723"/>
    </source>
</evidence>
<evidence type="ECO:0000256" key="5">
    <source>
        <dbReference type="SAM" id="MobiDB-lite"/>
    </source>
</evidence>
<evidence type="ECO:0000269" key="6">
    <source>
    </source>
</evidence>
<evidence type="ECO:0000305" key="7"/>
<evidence type="ECO:0000312" key="8">
    <source>
        <dbReference type="MGI" id="MGI:2143990"/>
    </source>
</evidence>
<evidence type="ECO:0007744" key="9">
    <source>
    </source>
</evidence>
<accession>Q8BZ20</accession>
<accession>Q0VB94</accession>
<accession>Q80VL6</accession>
<accession>Q8K333</accession>
<accession>Q8R3U2</accession>
<organism>
    <name type="scientific">Mus musculus</name>
    <name type="common">Mouse</name>
    <dbReference type="NCBI Taxonomy" id="10090"/>
    <lineage>
        <taxon>Eukaryota</taxon>
        <taxon>Metazoa</taxon>
        <taxon>Chordata</taxon>
        <taxon>Craniata</taxon>
        <taxon>Vertebrata</taxon>
        <taxon>Euteleostomi</taxon>
        <taxon>Mammalia</taxon>
        <taxon>Eutheria</taxon>
        <taxon>Euarchontoglires</taxon>
        <taxon>Glires</taxon>
        <taxon>Rodentia</taxon>
        <taxon>Myomorpha</taxon>
        <taxon>Muroidea</taxon>
        <taxon>Muridae</taxon>
        <taxon>Murinae</taxon>
        <taxon>Mus</taxon>
        <taxon>Mus</taxon>
    </lineage>
</organism>
<comment type="function">
    <text evidence="1 6">Mono-ADP-ribosyltransferase that mediates mono-ADP-ribosylation of target proteins. Displays anti-alphavirus activity during IFN-gamma immune activation by directly ADP-ribosylating the alphaviral non-structural proteins nsP3 and nsP4. Acts as a component of the PRKD1-driven regulatory cascade that selectively controls a major branch of the basolateral transport pathway by catalyzing the MARylation of GOLGA1. Acts also as a key regulator of mitochondrial function, protein translation, and inflammation (PubMed:35916471). Inhibits PINK1/Parkin-dependent mitophagy and promotes cartilage degeneration by inhibiting the ubiquitination and SUMOylation of MFN1/2 by upregulating ISG15 and ISGylation.</text>
</comment>
<comment type="catalytic activity">
    <reaction evidence="1">
        <text>L-aspartyl-[protein] + NAD(+) = 4-O-(ADP-D-ribosyl)-L-aspartyl-[protein] + nicotinamide</text>
        <dbReference type="Rhea" id="RHEA:54424"/>
        <dbReference type="Rhea" id="RHEA-COMP:9867"/>
        <dbReference type="Rhea" id="RHEA-COMP:13832"/>
        <dbReference type="ChEBI" id="CHEBI:17154"/>
        <dbReference type="ChEBI" id="CHEBI:29961"/>
        <dbReference type="ChEBI" id="CHEBI:57540"/>
        <dbReference type="ChEBI" id="CHEBI:138102"/>
    </reaction>
    <physiologicalReaction direction="left-to-right" evidence="1">
        <dbReference type="Rhea" id="RHEA:54425"/>
    </physiologicalReaction>
</comment>
<comment type="catalytic activity">
    <reaction evidence="1">
        <text>L-cysteinyl-[protein] + NAD(+) = S-(ADP-D-ribosyl)-L-cysteinyl-[protein] + nicotinamide + H(+)</text>
        <dbReference type="Rhea" id="RHEA:56612"/>
        <dbReference type="Rhea" id="RHEA-COMP:10131"/>
        <dbReference type="Rhea" id="RHEA-COMP:14624"/>
        <dbReference type="ChEBI" id="CHEBI:15378"/>
        <dbReference type="ChEBI" id="CHEBI:17154"/>
        <dbReference type="ChEBI" id="CHEBI:29950"/>
        <dbReference type="ChEBI" id="CHEBI:57540"/>
        <dbReference type="ChEBI" id="CHEBI:140607"/>
    </reaction>
    <physiologicalReaction direction="left-to-right" evidence="1">
        <dbReference type="Rhea" id="RHEA:56613"/>
    </physiologicalReaction>
</comment>
<comment type="subunit">
    <text evidence="1">Interacts with PARP11; this interaction plays a key role in zika virus suppression. Interacts with ISG15.</text>
</comment>
<comment type="subcellular location">
    <subcellularLocation>
        <location evidence="1">Nucleus</location>
    </subcellularLocation>
    <subcellularLocation>
        <location evidence="1">Golgi apparatus</location>
        <location evidence="1">trans-Golgi network</location>
    </subcellularLocation>
    <subcellularLocation>
        <location evidence="1">Cytoplasm</location>
        <location evidence="1">Stress granule</location>
    </subcellularLocation>
    <text evidence="1">Translocates from the Golgi complex to stress granules upon stress conditions.</text>
</comment>
<comment type="PTM">
    <text evidence="1">Auto-mono-ADP-ribosylated.</text>
</comment>
<comment type="PTM">
    <text evidence="1">Phosphorylated by PRKD1.</text>
</comment>
<comment type="similarity">
    <text evidence="7">Belongs to the ARTD/PARP family.</text>
</comment>